<keyword id="KW-0002">3D-structure</keyword>
<keyword id="KW-0903">Direct protein sequencing</keyword>
<keyword id="KW-1015">Disulfide bond</keyword>
<keyword id="KW-0249">Electron transport</keyword>
<keyword id="KW-0676">Redox-active center</keyword>
<keyword id="KW-1185">Reference proteome</keyword>
<keyword id="KW-0813">Transport</keyword>
<name>GLRX2_ECOLI</name>
<protein>
    <recommendedName>
        <fullName>Glutaredoxin 2</fullName>
        <shortName>Grx2</shortName>
    </recommendedName>
</protein>
<comment type="function">
    <text>Involved in reducing some disulfide bonds in a coupled system with glutathione reductase. Does not act as hydrogen donor for ribonucleotide reductase.</text>
</comment>
<comment type="similarity">
    <text evidence="2">Belongs to the glutaredoxin family.</text>
</comment>
<reference key="1">
    <citation type="journal article" date="1997" name="J. Biol. Chem.">
        <title>Cloning, overexpression, and characterization of glutaredoxin 2, an atypical glutaredoxin from Escherichia coli.</title>
        <authorList>
            <person name="Vlamis-Gardikas A."/>
            <person name="Aaslund F."/>
            <person name="Spyrou G."/>
            <person name="Bergman T."/>
            <person name="Holmgren A."/>
        </authorList>
    </citation>
    <scope>NUCLEOTIDE SEQUENCE [GENOMIC DNA]</scope>
    <scope>CHARACTERIZATION</scope>
    <source>
        <strain>K12</strain>
    </source>
</reference>
<reference key="2">
    <citation type="journal article" date="1996" name="DNA Res.">
        <title>A 718-kb DNA sequence of the Escherichia coli K-12 genome corresponding to the 12.7-28.0 min region on the linkage map.</title>
        <authorList>
            <person name="Oshima T."/>
            <person name="Aiba H."/>
            <person name="Baba T."/>
            <person name="Fujita K."/>
            <person name="Hayashi K."/>
            <person name="Honjo A."/>
            <person name="Ikemoto K."/>
            <person name="Inada T."/>
            <person name="Itoh T."/>
            <person name="Kajihara M."/>
            <person name="Kanai K."/>
            <person name="Kashimoto K."/>
            <person name="Kimura S."/>
            <person name="Kitagawa M."/>
            <person name="Makino K."/>
            <person name="Masuda S."/>
            <person name="Miki T."/>
            <person name="Mizobuchi K."/>
            <person name="Mori H."/>
            <person name="Motomura K."/>
            <person name="Nakamura Y."/>
            <person name="Nashimoto H."/>
            <person name="Nishio Y."/>
            <person name="Saito N."/>
            <person name="Sampei G."/>
            <person name="Seki Y."/>
            <person name="Tagami H."/>
            <person name="Takemoto K."/>
            <person name="Wada C."/>
            <person name="Yamamoto Y."/>
            <person name="Yano M."/>
            <person name="Horiuchi T."/>
        </authorList>
    </citation>
    <scope>NUCLEOTIDE SEQUENCE [LARGE SCALE GENOMIC DNA]</scope>
    <source>
        <strain>K12 / W3110 / ATCC 27325 / DSM 5911</strain>
    </source>
</reference>
<reference key="3">
    <citation type="journal article" date="1997" name="Science">
        <title>The complete genome sequence of Escherichia coli K-12.</title>
        <authorList>
            <person name="Blattner F.R."/>
            <person name="Plunkett G. III"/>
            <person name="Bloch C.A."/>
            <person name="Perna N.T."/>
            <person name="Burland V."/>
            <person name="Riley M."/>
            <person name="Collado-Vides J."/>
            <person name="Glasner J.D."/>
            <person name="Rode C.K."/>
            <person name="Mayhew G.F."/>
            <person name="Gregor J."/>
            <person name="Davis N.W."/>
            <person name="Kirkpatrick H.A."/>
            <person name="Goeden M.A."/>
            <person name="Rose D.J."/>
            <person name="Mau B."/>
            <person name="Shao Y."/>
        </authorList>
    </citation>
    <scope>NUCLEOTIDE SEQUENCE [LARGE SCALE GENOMIC DNA]</scope>
    <source>
        <strain>K12 / MG1655 / ATCC 47076</strain>
    </source>
</reference>
<reference key="4">
    <citation type="journal article" date="2006" name="Mol. Syst. Biol.">
        <title>Highly accurate genome sequences of Escherichia coli K-12 strains MG1655 and W3110.</title>
        <authorList>
            <person name="Hayashi K."/>
            <person name="Morooka N."/>
            <person name="Yamamoto Y."/>
            <person name="Fujita K."/>
            <person name="Isono K."/>
            <person name="Choi S."/>
            <person name="Ohtsubo E."/>
            <person name="Baba T."/>
            <person name="Wanner B.L."/>
            <person name="Mori H."/>
            <person name="Horiuchi T."/>
        </authorList>
    </citation>
    <scope>NUCLEOTIDE SEQUENCE [LARGE SCALE GENOMIC DNA]</scope>
    <source>
        <strain>K12 / W3110 / ATCC 27325 / DSM 5911</strain>
    </source>
</reference>
<reference key="5">
    <citation type="journal article" date="1994" name="Proc. Natl. Acad. Sci. U.S.A.">
        <title>Two additional glutaredoxins exist in Escherichia coli: glutaredoxin 3 is a hydrogen donor for ribonucleotide reductase in a thioredoxin/glutaredoxin 1 double mutant.</title>
        <authorList>
            <person name="Aaslund F."/>
            <person name="Ehn B."/>
            <person name="Miranda-Vizuete A."/>
            <person name="Pueyo C."/>
            <person name="Holmgren A."/>
        </authorList>
    </citation>
    <scope>PROTEIN SEQUENCE OF 1-18</scope>
    <scope>CHARACTERIZATION</scope>
</reference>
<dbReference type="EMBL" id="X92076">
    <property type="protein sequence ID" value="CAA63058.1"/>
    <property type="molecule type" value="Genomic_DNA"/>
</dbReference>
<dbReference type="EMBL" id="U00096">
    <property type="protein sequence ID" value="AAC74148.1"/>
    <property type="molecule type" value="Genomic_DNA"/>
</dbReference>
<dbReference type="EMBL" id="AP009048">
    <property type="protein sequence ID" value="BAA35872.1"/>
    <property type="molecule type" value="Genomic_DNA"/>
</dbReference>
<dbReference type="PIR" id="E64849">
    <property type="entry name" value="E64849"/>
</dbReference>
<dbReference type="RefSeq" id="NP_415582.1">
    <property type="nucleotide sequence ID" value="NC_000913.3"/>
</dbReference>
<dbReference type="RefSeq" id="WP_000780912.1">
    <property type="nucleotide sequence ID" value="NZ_STEB01000016.1"/>
</dbReference>
<dbReference type="PDB" id="1G7O">
    <property type="method" value="NMR"/>
    <property type="chains" value="A=1-215"/>
</dbReference>
<dbReference type="PDB" id="4KSM">
    <property type="method" value="X-ray"/>
    <property type="resolution" value="2.40 A"/>
    <property type="chains" value="A=1-215"/>
</dbReference>
<dbReference type="PDB" id="4KX4">
    <property type="method" value="X-ray"/>
    <property type="resolution" value="1.60 A"/>
    <property type="chains" value="A=1-215"/>
</dbReference>
<dbReference type="PDB" id="7D9L">
    <property type="method" value="X-ray"/>
    <property type="resolution" value="1.61 A"/>
    <property type="chains" value="A=1-215"/>
</dbReference>
<dbReference type="PDB" id="7DKP">
    <property type="method" value="X-ray"/>
    <property type="resolution" value="1.45 A"/>
    <property type="chains" value="A/B/C/D=1-215"/>
</dbReference>
<dbReference type="PDB" id="7DKR">
    <property type="method" value="X-ray"/>
    <property type="resolution" value="2.38 A"/>
    <property type="chains" value="A=1-215"/>
</dbReference>
<dbReference type="PDBsum" id="1G7O"/>
<dbReference type="PDBsum" id="4KSM"/>
<dbReference type="PDBsum" id="4KX4"/>
<dbReference type="PDBsum" id="7D9L"/>
<dbReference type="PDBsum" id="7DKP"/>
<dbReference type="PDBsum" id="7DKR"/>
<dbReference type="BMRB" id="P0AC59"/>
<dbReference type="SMR" id="P0AC59"/>
<dbReference type="BioGRID" id="4260069">
    <property type="interactions" value="21"/>
</dbReference>
<dbReference type="BioGRID" id="851265">
    <property type="interactions" value="1"/>
</dbReference>
<dbReference type="DIP" id="DIP-48247N"/>
<dbReference type="FunCoup" id="P0AC59">
    <property type="interactions" value="5"/>
</dbReference>
<dbReference type="IntAct" id="P0AC59">
    <property type="interactions" value="1"/>
</dbReference>
<dbReference type="STRING" id="511145.b1064"/>
<dbReference type="jPOST" id="P0AC59"/>
<dbReference type="PaxDb" id="511145-b1064"/>
<dbReference type="EnsemblBacteria" id="AAC74148">
    <property type="protein sequence ID" value="AAC74148"/>
    <property type="gene ID" value="b1064"/>
</dbReference>
<dbReference type="GeneID" id="93776343"/>
<dbReference type="GeneID" id="946926"/>
<dbReference type="KEGG" id="ecj:JW1051"/>
<dbReference type="KEGG" id="eco:b1064"/>
<dbReference type="PATRIC" id="fig|1411691.4.peg.1204"/>
<dbReference type="EchoBASE" id="EB2551"/>
<dbReference type="eggNOG" id="COG2999">
    <property type="taxonomic scope" value="Bacteria"/>
</dbReference>
<dbReference type="HOGENOM" id="CLU_072939_0_1_6"/>
<dbReference type="InParanoid" id="P0AC59"/>
<dbReference type="OMA" id="NLTCVKG"/>
<dbReference type="OrthoDB" id="5291571at2"/>
<dbReference type="PhylomeDB" id="P0AC59"/>
<dbReference type="BioCyc" id="EcoCyc:GRXB-MONOMER"/>
<dbReference type="BioCyc" id="MetaCyc:GRXB-MONOMER"/>
<dbReference type="SABIO-RK" id="P0AC59"/>
<dbReference type="EvolutionaryTrace" id="P0AC59"/>
<dbReference type="PRO" id="PR:P0AC59"/>
<dbReference type="Proteomes" id="UP000000625">
    <property type="component" value="Chromosome"/>
</dbReference>
<dbReference type="GO" id="GO:0005829">
    <property type="term" value="C:cytosol"/>
    <property type="evidence" value="ECO:0000314"/>
    <property type="project" value="EcoCyc"/>
</dbReference>
<dbReference type="GO" id="GO:0015038">
    <property type="term" value="F:glutathione disulfide oxidoreductase activity"/>
    <property type="evidence" value="ECO:0000314"/>
    <property type="project" value="EcoCyc"/>
</dbReference>
<dbReference type="CDD" id="cd03199">
    <property type="entry name" value="GST_C_GRX2"/>
    <property type="match status" value="1"/>
</dbReference>
<dbReference type="CDD" id="cd03037">
    <property type="entry name" value="GST_N_GRX2"/>
    <property type="match status" value="1"/>
</dbReference>
<dbReference type="Gene3D" id="1.20.1050.10">
    <property type="match status" value="1"/>
</dbReference>
<dbReference type="Gene3D" id="3.40.30.10">
    <property type="entry name" value="Glutaredoxin"/>
    <property type="match status" value="1"/>
</dbReference>
<dbReference type="InterPro" id="IPR011767">
    <property type="entry name" value="GLR_AS"/>
</dbReference>
<dbReference type="InterPro" id="IPR007494">
    <property type="entry name" value="Glutaredoxin2_C"/>
</dbReference>
<dbReference type="InterPro" id="IPR036282">
    <property type="entry name" value="Glutathione-S-Trfase_C_sf"/>
</dbReference>
<dbReference type="InterPro" id="IPR004045">
    <property type="entry name" value="Glutathione_S-Trfase_N"/>
</dbReference>
<dbReference type="InterPro" id="IPR011901">
    <property type="entry name" value="Grx2"/>
</dbReference>
<dbReference type="InterPro" id="IPR036249">
    <property type="entry name" value="Thioredoxin-like_sf"/>
</dbReference>
<dbReference type="NCBIfam" id="TIGR02182">
    <property type="entry name" value="GRXB"/>
    <property type="match status" value="1"/>
</dbReference>
<dbReference type="NCBIfam" id="NF007702">
    <property type="entry name" value="PRK10387.1"/>
    <property type="match status" value="1"/>
</dbReference>
<dbReference type="Pfam" id="PF04399">
    <property type="entry name" value="Glutaredoxin2_C"/>
    <property type="match status" value="1"/>
</dbReference>
<dbReference type="Pfam" id="PF13417">
    <property type="entry name" value="GST_N_3"/>
    <property type="match status" value="1"/>
</dbReference>
<dbReference type="SFLD" id="SFLDG01183">
    <property type="entry name" value="Grx2-like"/>
    <property type="match status" value="1"/>
</dbReference>
<dbReference type="SFLD" id="SFLDG01204">
    <property type="entry name" value="Grx2-like.1"/>
    <property type="match status" value="1"/>
</dbReference>
<dbReference type="SUPFAM" id="SSF47616">
    <property type="entry name" value="GST C-terminal domain-like"/>
    <property type="match status" value="1"/>
</dbReference>
<dbReference type="SUPFAM" id="SSF52833">
    <property type="entry name" value="Thioredoxin-like"/>
    <property type="match status" value="1"/>
</dbReference>
<dbReference type="PROSITE" id="PS00195">
    <property type="entry name" value="GLUTAREDOXIN_1"/>
    <property type="match status" value="1"/>
</dbReference>
<dbReference type="PROSITE" id="PS50404">
    <property type="entry name" value="GST_NTER"/>
    <property type="match status" value="1"/>
</dbReference>
<evidence type="ECO:0000250" key="1"/>
<evidence type="ECO:0000305" key="2"/>
<evidence type="ECO:0007829" key="3">
    <source>
        <dbReference type="PDB" id="1G7O"/>
    </source>
</evidence>
<evidence type="ECO:0007829" key="4">
    <source>
        <dbReference type="PDB" id="7DKP"/>
    </source>
</evidence>
<feature type="chain" id="PRO_0000141585" description="Glutaredoxin 2">
    <location>
        <begin position="1"/>
        <end position="215"/>
    </location>
</feature>
<feature type="domain" description="GST N-terminal">
    <location>
        <begin position="1"/>
        <end position="77"/>
    </location>
</feature>
<feature type="disulfide bond" description="Redox-active" evidence="1">
    <location>
        <begin position="9"/>
        <end position="12"/>
    </location>
</feature>
<feature type="sequence conflict" description="In Ref. 5; AA sequence." evidence="2" ref="5">
    <original>L</original>
    <variation>I</variation>
    <location>
        <position position="13"/>
    </location>
</feature>
<feature type="strand" evidence="4">
    <location>
        <begin position="2"/>
        <end position="5"/>
    </location>
</feature>
<feature type="helix" evidence="4">
    <location>
        <begin position="10"/>
        <end position="21"/>
    </location>
</feature>
<feature type="strand" evidence="4">
    <location>
        <begin position="27"/>
        <end position="30"/>
    </location>
</feature>
<feature type="helix" evidence="4">
    <location>
        <begin position="37"/>
        <end position="43"/>
    </location>
</feature>
<feature type="strand" evidence="4">
    <location>
        <begin position="44"/>
        <end position="46"/>
    </location>
</feature>
<feature type="strand" evidence="4">
    <location>
        <begin position="50"/>
        <end position="52"/>
    </location>
</feature>
<feature type="turn" evidence="3">
    <location>
        <begin position="54"/>
        <end position="56"/>
    </location>
</feature>
<feature type="strand" evidence="4">
    <location>
        <begin position="58"/>
        <end position="60"/>
    </location>
</feature>
<feature type="helix" evidence="4">
    <location>
        <begin position="62"/>
        <end position="71"/>
    </location>
</feature>
<feature type="helix" evidence="4">
    <location>
        <begin position="84"/>
        <end position="94"/>
    </location>
</feature>
<feature type="turn" evidence="4">
    <location>
        <begin position="95"/>
        <end position="97"/>
    </location>
</feature>
<feature type="helix" evidence="4">
    <location>
        <begin position="98"/>
        <end position="107"/>
    </location>
</feature>
<feature type="helix" evidence="4">
    <location>
        <begin position="111"/>
        <end position="113"/>
    </location>
</feature>
<feature type="helix" evidence="4">
    <location>
        <begin position="116"/>
        <end position="130"/>
    </location>
</feature>
<feature type="helix" evidence="4">
    <location>
        <begin position="133"/>
        <end position="138"/>
    </location>
</feature>
<feature type="helix" evidence="4">
    <location>
        <begin position="140"/>
        <end position="155"/>
    </location>
</feature>
<feature type="strand" evidence="3">
    <location>
        <begin position="159"/>
        <end position="162"/>
    </location>
</feature>
<feature type="helix" evidence="4">
    <location>
        <begin position="170"/>
        <end position="182"/>
    </location>
</feature>
<feature type="helix" evidence="4">
    <location>
        <begin position="192"/>
        <end position="205"/>
    </location>
</feature>
<feature type="helix" evidence="4">
    <location>
        <begin position="211"/>
        <end position="213"/>
    </location>
</feature>
<proteinExistence type="evidence at protein level"/>
<sequence length="215" mass="24350">MKLYIYDHCPYCLKARMIFGLKNIPVELHVLLNDDAETPTRMVGQKQVPILQKDDSRYMPESMDIVHYVDKLDGKPLLTGKRSPAIEEWLRKVNGYANKLLLPRFAKSAFDEFSTPAARKYFVDKKEASAGNFADLLAHSDGLIKNISDDLRALDKLIVKPNAVNGELSEDDIQLFPLLRNLTLVAGINWPSRVADYRDNMAKQTQINLLSSMAI</sequence>
<gene>
    <name type="primary">grxB</name>
    <name type="ordered locus">b1064</name>
    <name type="ordered locus">JW1051</name>
</gene>
<accession>P0AC59</accession>
<accession>P39811</accession>
<accession>P75928</accession>
<accession>P77043</accession>
<organism>
    <name type="scientific">Escherichia coli (strain K12)</name>
    <dbReference type="NCBI Taxonomy" id="83333"/>
    <lineage>
        <taxon>Bacteria</taxon>
        <taxon>Pseudomonadati</taxon>
        <taxon>Pseudomonadota</taxon>
        <taxon>Gammaproteobacteria</taxon>
        <taxon>Enterobacterales</taxon>
        <taxon>Enterobacteriaceae</taxon>
        <taxon>Escherichia</taxon>
    </lineage>
</organism>